<reference key="1">
    <citation type="journal article" date="1997" name="Nature">
        <title>The nucleotide sequence of Saccharomyces cerevisiae chromosome IV.</title>
        <authorList>
            <person name="Jacq C."/>
            <person name="Alt-Moerbe J."/>
            <person name="Andre B."/>
            <person name="Arnold W."/>
            <person name="Bahr A."/>
            <person name="Ballesta J.P.G."/>
            <person name="Bargues M."/>
            <person name="Baron L."/>
            <person name="Becker A."/>
            <person name="Biteau N."/>
            <person name="Bloecker H."/>
            <person name="Blugeon C."/>
            <person name="Boskovic J."/>
            <person name="Brandt P."/>
            <person name="Brueckner M."/>
            <person name="Buitrago M.J."/>
            <person name="Coster F."/>
            <person name="Delaveau T."/>
            <person name="del Rey F."/>
            <person name="Dujon B."/>
            <person name="Eide L.G."/>
            <person name="Garcia-Cantalejo J.M."/>
            <person name="Goffeau A."/>
            <person name="Gomez-Peris A."/>
            <person name="Granotier C."/>
            <person name="Hanemann V."/>
            <person name="Hankeln T."/>
            <person name="Hoheisel J.D."/>
            <person name="Jaeger W."/>
            <person name="Jimenez A."/>
            <person name="Jonniaux J.-L."/>
            <person name="Kraemer C."/>
            <person name="Kuester H."/>
            <person name="Laamanen P."/>
            <person name="Legros Y."/>
            <person name="Louis E.J."/>
            <person name="Moeller-Rieker S."/>
            <person name="Monnet A."/>
            <person name="Moro M."/>
            <person name="Mueller-Auer S."/>
            <person name="Nussbaumer B."/>
            <person name="Paricio N."/>
            <person name="Paulin L."/>
            <person name="Perea J."/>
            <person name="Perez-Alonso M."/>
            <person name="Perez-Ortin J.E."/>
            <person name="Pohl T.M."/>
            <person name="Prydz H."/>
            <person name="Purnelle B."/>
            <person name="Rasmussen S.W."/>
            <person name="Remacha M.A."/>
            <person name="Revuelta J.L."/>
            <person name="Rieger M."/>
            <person name="Salom D."/>
            <person name="Saluz H.P."/>
            <person name="Saiz J.E."/>
            <person name="Saren A.-M."/>
            <person name="Schaefer M."/>
            <person name="Scharfe M."/>
            <person name="Schmidt E.R."/>
            <person name="Schneider C."/>
            <person name="Scholler P."/>
            <person name="Schwarz S."/>
            <person name="Soler-Mira A."/>
            <person name="Urrestarazu L.A."/>
            <person name="Verhasselt P."/>
            <person name="Vissers S."/>
            <person name="Voet M."/>
            <person name="Volckaert G."/>
            <person name="Wagner G."/>
            <person name="Wambutt R."/>
            <person name="Wedler E."/>
            <person name="Wedler H."/>
            <person name="Woelfl S."/>
            <person name="Harris D.E."/>
            <person name="Bowman S."/>
            <person name="Brown D."/>
            <person name="Churcher C.M."/>
            <person name="Connor R."/>
            <person name="Dedman K."/>
            <person name="Gentles S."/>
            <person name="Hamlin N."/>
            <person name="Hunt S."/>
            <person name="Jones L."/>
            <person name="McDonald S."/>
            <person name="Murphy L.D."/>
            <person name="Niblett D."/>
            <person name="Odell C."/>
            <person name="Oliver K."/>
            <person name="Rajandream M.A."/>
            <person name="Richards C."/>
            <person name="Shore L."/>
            <person name="Walsh S.V."/>
            <person name="Barrell B.G."/>
            <person name="Dietrich F.S."/>
            <person name="Mulligan J.T."/>
            <person name="Allen E."/>
            <person name="Araujo R."/>
            <person name="Aviles E."/>
            <person name="Berno A."/>
            <person name="Carpenter J."/>
            <person name="Chen E."/>
            <person name="Cherry J.M."/>
            <person name="Chung E."/>
            <person name="Duncan M."/>
            <person name="Hunicke-Smith S."/>
            <person name="Hyman R.W."/>
            <person name="Komp C."/>
            <person name="Lashkari D."/>
            <person name="Lew H."/>
            <person name="Lin D."/>
            <person name="Mosedale D."/>
            <person name="Nakahara K."/>
            <person name="Namath A."/>
            <person name="Oefner P."/>
            <person name="Oh C."/>
            <person name="Petel F.X."/>
            <person name="Roberts D."/>
            <person name="Schramm S."/>
            <person name="Schroeder M."/>
            <person name="Shogren T."/>
            <person name="Shroff N."/>
            <person name="Winant A."/>
            <person name="Yelton M.A."/>
            <person name="Botstein D."/>
            <person name="Davis R.W."/>
            <person name="Johnston M."/>
            <person name="Andrews S."/>
            <person name="Brinkman R."/>
            <person name="Cooper J."/>
            <person name="Ding H."/>
            <person name="Du Z."/>
            <person name="Favello A."/>
            <person name="Fulton L."/>
            <person name="Gattung S."/>
            <person name="Greco T."/>
            <person name="Hallsworth K."/>
            <person name="Hawkins J."/>
            <person name="Hillier L.W."/>
            <person name="Jier M."/>
            <person name="Johnson D."/>
            <person name="Johnston L."/>
            <person name="Kirsten J."/>
            <person name="Kucaba T."/>
            <person name="Langston Y."/>
            <person name="Latreille P."/>
            <person name="Le T."/>
            <person name="Mardis E."/>
            <person name="Menezes S."/>
            <person name="Miller N."/>
            <person name="Nhan M."/>
            <person name="Pauley A."/>
            <person name="Peluso D."/>
            <person name="Rifkin L."/>
            <person name="Riles L."/>
            <person name="Taich A."/>
            <person name="Trevaskis E."/>
            <person name="Vignati D."/>
            <person name="Wilcox L."/>
            <person name="Wohldman P."/>
            <person name="Vaudin M."/>
            <person name="Wilson R."/>
            <person name="Waterston R."/>
            <person name="Albermann K."/>
            <person name="Hani J."/>
            <person name="Heumann K."/>
            <person name="Kleine K."/>
            <person name="Mewes H.-W."/>
            <person name="Zollner A."/>
            <person name="Zaccaria P."/>
        </authorList>
    </citation>
    <scope>NUCLEOTIDE SEQUENCE [LARGE SCALE GENOMIC DNA]</scope>
    <source>
        <strain>ATCC 204508 / S288c</strain>
    </source>
</reference>
<reference key="2">
    <citation type="journal article" date="2014" name="G3 (Bethesda)">
        <title>The reference genome sequence of Saccharomyces cerevisiae: Then and now.</title>
        <authorList>
            <person name="Engel S.R."/>
            <person name="Dietrich F.S."/>
            <person name="Fisk D.G."/>
            <person name="Binkley G."/>
            <person name="Balakrishnan R."/>
            <person name="Costanzo M.C."/>
            <person name="Dwight S.S."/>
            <person name="Hitz B.C."/>
            <person name="Karra K."/>
            <person name="Nash R.S."/>
            <person name="Weng S."/>
            <person name="Wong E.D."/>
            <person name="Lloyd P."/>
            <person name="Skrzypek M.S."/>
            <person name="Miyasato S.R."/>
            <person name="Simison M."/>
            <person name="Cherry J.M."/>
        </authorList>
    </citation>
    <scope>GENOME REANNOTATION</scope>
    <source>
        <strain>ATCC 204508 / S288c</strain>
    </source>
</reference>
<sequence>MNAVLTRRHGLGDNSLQTNFSLSQFISRWVFDLQSSQSIGQSSFNLGLGTSLQFRRQDWVSDSLFDGGNVGFQSLSSFVLLGKSFIGSLELFSLVNHLFNFFRRQSTNSVRDSDVRRLTGRLFDGSNLQDTVSINFEDSFQDWFTSWHHWDVLQVEFTQQSVFFTVNTFTLVDWELNGGLVVSTCSKGSSLDGWNSSVSWNNDTEHVTLHTNT</sequence>
<name>YD228_YEAST</name>
<evidence type="ECO:0000305" key="1"/>
<evidence type="ECO:0000305" key="2">
    <source>
    </source>
</evidence>
<protein>
    <recommendedName>
        <fullName>Putative uncharacterized protein YDL228C</fullName>
    </recommendedName>
</protein>
<gene>
    <name type="ordered locus">YDL228C</name>
</gene>
<proteinExistence type="uncertain"/>
<dbReference type="EMBL" id="Z74277">
    <property type="protein sequence ID" value="CAA98808.1"/>
    <property type="molecule type" value="Genomic_DNA"/>
</dbReference>
<dbReference type="PIR" id="S67791">
    <property type="entry name" value="S67791"/>
</dbReference>
<dbReference type="STRING" id="4932.YDL228C"/>
<dbReference type="PaxDb" id="4932-YDL228C"/>
<dbReference type="EnsemblFungi" id="YDL228C_mRNA">
    <property type="protein sequence ID" value="YDL228C"/>
    <property type="gene ID" value="YDL228C"/>
</dbReference>
<dbReference type="AGR" id="SGD:S000002387"/>
<dbReference type="SGD" id="S000002387">
    <property type="gene designation" value="YDL228C"/>
</dbReference>
<dbReference type="eggNOG" id="ENOG502R754">
    <property type="taxonomic scope" value="Eukaryota"/>
</dbReference>
<dbReference type="HOGENOM" id="CLU_1295307_0_0_1"/>
<dbReference type="InterPro" id="IPR019651">
    <property type="entry name" value="Glutamate_DH_NAD-spec"/>
</dbReference>
<dbReference type="Pfam" id="PF10712">
    <property type="entry name" value="NAD-GH"/>
    <property type="match status" value="1"/>
</dbReference>
<accession>Q07658</accession>
<organism>
    <name type="scientific">Saccharomyces cerevisiae (strain ATCC 204508 / S288c)</name>
    <name type="common">Baker's yeast</name>
    <dbReference type="NCBI Taxonomy" id="559292"/>
    <lineage>
        <taxon>Eukaryota</taxon>
        <taxon>Fungi</taxon>
        <taxon>Dikarya</taxon>
        <taxon>Ascomycota</taxon>
        <taxon>Saccharomycotina</taxon>
        <taxon>Saccharomycetes</taxon>
        <taxon>Saccharomycetales</taxon>
        <taxon>Saccharomycetaceae</taxon>
        <taxon>Saccharomyces</taxon>
    </lineage>
</organism>
<comment type="miscellaneous">
    <text evidence="1">Partially overlaps SSB1.</text>
</comment>
<comment type="caution">
    <text evidence="2">Product of a dubious gene prediction unlikely to encode a functional protein. Because of that it is not part of the S.cerevisiae S288c complete/reference proteome set.</text>
</comment>
<feature type="chain" id="PRO_0000299866" description="Putative uncharacterized protein YDL228C">
    <location>
        <begin position="1"/>
        <end position="213"/>
    </location>
</feature>